<organism>
    <name type="scientific">Salmonella newport (strain SL254)</name>
    <dbReference type="NCBI Taxonomy" id="423368"/>
    <lineage>
        <taxon>Bacteria</taxon>
        <taxon>Pseudomonadati</taxon>
        <taxon>Pseudomonadota</taxon>
        <taxon>Gammaproteobacteria</taxon>
        <taxon>Enterobacterales</taxon>
        <taxon>Enterobacteriaceae</taxon>
        <taxon>Salmonella</taxon>
    </lineage>
</organism>
<name>DEOD_SALNS</name>
<keyword id="KW-0328">Glycosyltransferase</keyword>
<keyword id="KW-0808">Transferase</keyword>
<comment type="function">
    <text evidence="2">Catalyzes the reversible phosphorolytic breakdown of the N-glycosidic bond in the beta-(deoxy)ribonucleoside molecules, with the formation of the corresponding free purine bases and pentose-1-phosphate.</text>
</comment>
<comment type="catalytic activity">
    <reaction evidence="2">
        <text>a purine D-ribonucleoside + phosphate = a purine nucleobase + alpha-D-ribose 1-phosphate</text>
        <dbReference type="Rhea" id="RHEA:19805"/>
        <dbReference type="ChEBI" id="CHEBI:26386"/>
        <dbReference type="ChEBI" id="CHEBI:43474"/>
        <dbReference type="ChEBI" id="CHEBI:57720"/>
        <dbReference type="ChEBI" id="CHEBI:142355"/>
        <dbReference type="EC" id="2.4.2.1"/>
    </reaction>
</comment>
<comment type="catalytic activity">
    <reaction evidence="2">
        <text>a purine 2'-deoxy-D-ribonucleoside + phosphate = a purine nucleobase + 2-deoxy-alpha-D-ribose 1-phosphate</text>
        <dbReference type="Rhea" id="RHEA:36431"/>
        <dbReference type="ChEBI" id="CHEBI:26386"/>
        <dbReference type="ChEBI" id="CHEBI:43474"/>
        <dbReference type="ChEBI" id="CHEBI:57259"/>
        <dbReference type="ChEBI" id="CHEBI:142361"/>
        <dbReference type="EC" id="2.4.2.1"/>
    </reaction>
</comment>
<comment type="subunit">
    <text evidence="2">Homohexamer; trimer of homodimers.</text>
</comment>
<comment type="similarity">
    <text evidence="2">Belongs to the PNP/UDP phosphorylase family.</text>
</comment>
<gene>
    <name evidence="2" type="primary">deoD</name>
    <name type="ordered locus">SNSL254_A4926</name>
</gene>
<sequence length="239" mass="25979">MATPHINAEMGDFADVVLMPGDPLRAKHIAETFLEDVREVNNVRGMLGFTGTYKGRKISVMGHGMGIPSCSIYTKELITDFGVKKIIRVGSCGAVRMDVKLRDVVIGMGACTDSKVNRIRFKDHDFAAIADFDMVRNAVDAAKALGVDARVGNLFSADLFYSPDGEMFDVMEKYGVLGVEMEAAGIYGVAAEFGAKALTICTVSDHIRTHEQTTAAERQTTFNDMIKIALESVLLGDKE</sequence>
<proteinExistence type="inferred from homology"/>
<feature type="chain" id="PRO_1000186219" description="Purine nucleoside phosphorylase DeoD-type">
    <location>
        <begin position="1"/>
        <end position="239"/>
    </location>
</feature>
<feature type="active site" description="Proton donor" evidence="2">
    <location>
        <position position="205"/>
    </location>
</feature>
<feature type="binding site" evidence="1">
    <location>
        <position position="5"/>
    </location>
    <ligand>
        <name>a purine D-ribonucleoside</name>
        <dbReference type="ChEBI" id="CHEBI:142355"/>
        <note>ligand shared between dimeric partners</note>
    </ligand>
</feature>
<feature type="binding site" description="in other chain" evidence="1">
    <location>
        <position position="21"/>
    </location>
    <ligand>
        <name>phosphate</name>
        <dbReference type="ChEBI" id="CHEBI:43474"/>
        <note>ligand shared between dimeric partners</note>
    </ligand>
</feature>
<feature type="binding site" description="in other chain" evidence="1">
    <location>
        <position position="25"/>
    </location>
    <ligand>
        <name>phosphate</name>
        <dbReference type="ChEBI" id="CHEBI:43474"/>
        <note>ligand shared between dimeric partners</note>
    </ligand>
</feature>
<feature type="binding site" evidence="1">
    <location>
        <position position="44"/>
    </location>
    <ligand>
        <name>phosphate</name>
        <dbReference type="ChEBI" id="CHEBI:43474"/>
        <note>ligand shared between dimeric partners</note>
    </ligand>
</feature>
<feature type="binding site" description="in other chain" evidence="1">
    <location>
        <begin position="88"/>
        <end position="91"/>
    </location>
    <ligand>
        <name>phosphate</name>
        <dbReference type="ChEBI" id="CHEBI:43474"/>
        <note>ligand shared between dimeric partners</note>
    </ligand>
</feature>
<feature type="binding site" description="in other chain" evidence="1">
    <location>
        <begin position="180"/>
        <end position="182"/>
    </location>
    <ligand>
        <name>a purine D-ribonucleoside</name>
        <dbReference type="ChEBI" id="CHEBI:142355"/>
        <note>ligand shared between dimeric partners</note>
    </ligand>
</feature>
<feature type="binding site" description="in other chain" evidence="1">
    <location>
        <begin position="204"/>
        <end position="205"/>
    </location>
    <ligand>
        <name>a purine D-ribonucleoside</name>
        <dbReference type="ChEBI" id="CHEBI:142355"/>
        <note>ligand shared between dimeric partners</note>
    </ligand>
</feature>
<feature type="site" description="Important for catalytic activity" evidence="2">
    <location>
        <position position="218"/>
    </location>
</feature>
<dbReference type="EC" id="2.4.2.1" evidence="2"/>
<dbReference type="EMBL" id="CP001113">
    <property type="protein sequence ID" value="ACF61184.1"/>
    <property type="molecule type" value="Genomic_DNA"/>
</dbReference>
<dbReference type="RefSeq" id="WP_000224864.1">
    <property type="nucleotide sequence ID" value="NZ_CCMR01000003.1"/>
</dbReference>
<dbReference type="SMR" id="B4T4H3"/>
<dbReference type="GeneID" id="89550598"/>
<dbReference type="KEGG" id="see:SNSL254_A4926"/>
<dbReference type="HOGENOM" id="CLU_068457_2_0_6"/>
<dbReference type="Proteomes" id="UP000008824">
    <property type="component" value="Chromosome"/>
</dbReference>
<dbReference type="GO" id="GO:0005829">
    <property type="term" value="C:cytosol"/>
    <property type="evidence" value="ECO:0007669"/>
    <property type="project" value="TreeGrafter"/>
</dbReference>
<dbReference type="GO" id="GO:0004731">
    <property type="term" value="F:purine-nucleoside phosphorylase activity"/>
    <property type="evidence" value="ECO:0007669"/>
    <property type="project" value="UniProtKB-UniRule"/>
</dbReference>
<dbReference type="GO" id="GO:0006152">
    <property type="term" value="P:purine nucleoside catabolic process"/>
    <property type="evidence" value="ECO:0007669"/>
    <property type="project" value="TreeGrafter"/>
</dbReference>
<dbReference type="CDD" id="cd09006">
    <property type="entry name" value="PNP_EcPNPI-like"/>
    <property type="match status" value="1"/>
</dbReference>
<dbReference type="FunFam" id="3.40.50.1580:FF:000002">
    <property type="entry name" value="Purine nucleoside phosphorylase DeoD-type"/>
    <property type="match status" value="1"/>
</dbReference>
<dbReference type="Gene3D" id="3.40.50.1580">
    <property type="entry name" value="Nucleoside phosphorylase domain"/>
    <property type="match status" value="1"/>
</dbReference>
<dbReference type="HAMAP" id="MF_01627">
    <property type="entry name" value="Pur_nucleosid_phosp"/>
    <property type="match status" value="1"/>
</dbReference>
<dbReference type="InterPro" id="IPR004402">
    <property type="entry name" value="DeoD-type"/>
</dbReference>
<dbReference type="InterPro" id="IPR018016">
    <property type="entry name" value="Nucleoside_phosphorylase_CS"/>
</dbReference>
<dbReference type="InterPro" id="IPR000845">
    <property type="entry name" value="Nucleoside_phosphorylase_d"/>
</dbReference>
<dbReference type="InterPro" id="IPR035994">
    <property type="entry name" value="Nucleoside_phosphorylase_sf"/>
</dbReference>
<dbReference type="NCBIfam" id="TIGR00107">
    <property type="entry name" value="deoD"/>
    <property type="match status" value="1"/>
</dbReference>
<dbReference type="NCBIfam" id="NF004489">
    <property type="entry name" value="PRK05819.1"/>
    <property type="match status" value="1"/>
</dbReference>
<dbReference type="NCBIfam" id="NF009914">
    <property type="entry name" value="PRK13374.1"/>
    <property type="match status" value="1"/>
</dbReference>
<dbReference type="PANTHER" id="PTHR43691:SF2">
    <property type="entry name" value="PURINE NUCLEOSIDE PHOSPHORYLASE DEOD-TYPE"/>
    <property type="match status" value="1"/>
</dbReference>
<dbReference type="PANTHER" id="PTHR43691">
    <property type="entry name" value="URIDINE PHOSPHORYLASE"/>
    <property type="match status" value="1"/>
</dbReference>
<dbReference type="Pfam" id="PF01048">
    <property type="entry name" value="PNP_UDP_1"/>
    <property type="match status" value="1"/>
</dbReference>
<dbReference type="SUPFAM" id="SSF53167">
    <property type="entry name" value="Purine and uridine phosphorylases"/>
    <property type="match status" value="1"/>
</dbReference>
<dbReference type="PROSITE" id="PS01232">
    <property type="entry name" value="PNP_UDP_1"/>
    <property type="match status" value="1"/>
</dbReference>
<protein>
    <recommendedName>
        <fullName evidence="2">Purine nucleoside phosphorylase DeoD-type</fullName>
        <shortName evidence="2">PNP</shortName>
        <ecNumber evidence="2">2.4.2.1</ecNumber>
    </recommendedName>
</protein>
<evidence type="ECO:0000250" key="1">
    <source>
        <dbReference type="UniProtKB" id="P50389"/>
    </source>
</evidence>
<evidence type="ECO:0000255" key="2">
    <source>
        <dbReference type="HAMAP-Rule" id="MF_01627"/>
    </source>
</evidence>
<reference key="1">
    <citation type="journal article" date="2011" name="J. Bacteriol.">
        <title>Comparative genomics of 28 Salmonella enterica isolates: evidence for CRISPR-mediated adaptive sublineage evolution.</title>
        <authorList>
            <person name="Fricke W.F."/>
            <person name="Mammel M.K."/>
            <person name="McDermott P.F."/>
            <person name="Tartera C."/>
            <person name="White D.G."/>
            <person name="Leclerc J.E."/>
            <person name="Ravel J."/>
            <person name="Cebula T.A."/>
        </authorList>
    </citation>
    <scope>NUCLEOTIDE SEQUENCE [LARGE SCALE GENOMIC DNA]</scope>
    <source>
        <strain>SL254</strain>
    </source>
</reference>
<accession>B4T4H3</accession>